<accession>C0QUJ3</accession>
<comment type="catalytic activity">
    <reaction evidence="1">
        <text>tRNA(Gly) + glycine + ATP = glycyl-tRNA(Gly) + AMP + diphosphate</text>
        <dbReference type="Rhea" id="RHEA:16013"/>
        <dbReference type="Rhea" id="RHEA-COMP:9664"/>
        <dbReference type="Rhea" id="RHEA-COMP:9683"/>
        <dbReference type="ChEBI" id="CHEBI:30616"/>
        <dbReference type="ChEBI" id="CHEBI:33019"/>
        <dbReference type="ChEBI" id="CHEBI:57305"/>
        <dbReference type="ChEBI" id="CHEBI:78442"/>
        <dbReference type="ChEBI" id="CHEBI:78522"/>
        <dbReference type="ChEBI" id="CHEBI:456215"/>
        <dbReference type="EC" id="6.1.1.14"/>
    </reaction>
</comment>
<comment type="subunit">
    <text evidence="1">Tetramer of two alpha and two beta subunits.</text>
</comment>
<comment type="subcellular location">
    <subcellularLocation>
        <location evidence="1">Cytoplasm</location>
    </subcellularLocation>
</comment>
<comment type="similarity">
    <text evidence="1">Belongs to the class-II aminoacyl-tRNA synthetase family.</text>
</comment>
<name>SYGB_PERMH</name>
<dbReference type="EC" id="6.1.1.14" evidence="1"/>
<dbReference type="EMBL" id="CP001230">
    <property type="protein sequence ID" value="ACO03046.1"/>
    <property type="molecule type" value="Genomic_DNA"/>
</dbReference>
<dbReference type="RefSeq" id="WP_012675285.1">
    <property type="nucleotide sequence ID" value="NC_012440.1"/>
</dbReference>
<dbReference type="SMR" id="C0QUJ3"/>
<dbReference type="STRING" id="123214.PERMA_0569"/>
<dbReference type="PaxDb" id="123214-PERMA_0569"/>
<dbReference type="KEGG" id="pmx:PERMA_0569"/>
<dbReference type="eggNOG" id="COG0751">
    <property type="taxonomic scope" value="Bacteria"/>
</dbReference>
<dbReference type="HOGENOM" id="CLU_007220_2_2_0"/>
<dbReference type="OrthoDB" id="9775440at2"/>
<dbReference type="Proteomes" id="UP000001366">
    <property type="component" value="Chromosome"/>
</dbReference>
<dbReference type="GO" id="GO:0005829">
    <property type="term" value="C:cytosol"/>
    <property type="evidence" value="ECO:0007669"/>
    <property type="project" value="TreeGrafter"/>
</dbReference>
<dbReference type="GO" id="GO:0004814">
    <property type="term" value="F:arginine-tRNA ligase activity"/>
    <property type="evidence" value="ECO:0007669"/>
    <property type="project" value="InterPro"/>
</dbReference>
<dbReference type="GO" id="GO:0005524">
    <property type="term" value="F:ATP binding"/>
    <property type="evidence" value="ECO:0007669"/>
    <property type="project" value="UniProtKB-UniRule"/>
</dbReference>
<dbReference type="GO" id="GO:0004820">
    <property type="term" value="F:glycine-tRNA ligase activity"/>
    <property type="evidence" value="ECO:0007669"/>
    <property type="project" value="UniProtKB-UniRule"/>
</dbReference>
<dbReference type="GO" id="GO:0006420">
    <property type="term" value="P:arginyl-tRNA aminoacylation"/>
    <property type="evidence" value="ECO:0007669"/>
    <property type="project" value="InterPro"/>
</dbReference>
<dbReference type="GO" id="GO:0006426">
    <property type="term" value="P:glycyl-tRNA aminoacylation"/>
    <property type="evidence" value="ECO:0007669"/>
    <property type="project" value="UniProtKB-UniRule"/>
</dbReference>
<dbReference type="HAMAP" id="MF_00255">
    <property type="entry name" value="Gly_tRNA_synth_beta"/>
    <property type="match status" value="1"/>
</dbReference>
<dbReference type="InterPro" id="IPR008909">
    <property type="entry name" value="DALR_anticod-bd"/>
</dbReference>
<dbReference type="InterPro" id="IPR015944">
    <property type="entry name" value="Gly-tRNA-synth_bsu"/>
</dbReference>
<dbReference type="InterPro" id="IPR006194">
    <property type="entry name" value="Gly-tRNA-synth_heterodimer"/>
</dbReference>
<dbReference type="NCBIfam" id="TIGR00211">
    <property type="entry name" value="glyS"/>
    <property type="match status" value="1"/>
</dbReference>
<dbReference type="PANTHER" id="PTHR30075:SF2">
    <property type="entry name" value="GLYCINE--TRNA LIGASE, CHLOROPLASTIC_MITOCHONDRIAL 2"/>
    <property type="match status" value="1"/>
</dbReference>
<dbReference type="PANTHER" id="PTHR30075">
    <property type="entry name" value="GLYCYL-TRNA SYNTHETASE"/>
    <property type="match status" value="1"/>
</dbReference>
<dbReference type="Pfam" id="PF05746">
    <property type="entry name" value="DALR_1"/>
    <property type="match status" value="1"/>
</dbReference>
<dbReference type="Pfam" id="PF02092">
    <property type="entry name" value="tRNA_synt_2f"/>
    <property type="match status" value="1"/>
</dbReference>
<dbReference type="PRINTS" id="PR01045">
    <property type="entry name" value="TRNASYNTHGB"/>
</dbReference>
<dbReference type="SUPFAM" id="SSF109604">
    <property type="entry name" value="HD-domain/PDEase-like"/>
    <property type="match status" value="1"/>
</dbReference>
<dbReference type="PROSITE" id="PS50861">
    <property type="entry name" value="AA_TRNA_LIGASE_II_GLYAB"/>
    <property type="match status" value="1"/>
</dbReference>
<organism>
    <name type="scientific">Persephonella marina (strain DSM 14350 / EX-H1)</name>
    <dbReference type="NCBI Taxonomy" id="123214"/>
    <lineage>
        <taxon>Bacteria</taxon>
        <taxon>Pseudomonadati</taxon>
        <taxon>Aquificota</taxon>
        <taxon>Aquificia</taxon>
        <taxon>Aquificales</taxon>
        <taxon>Hydrogenothermaceae</taxon>
        <taxon>Persephonella</taxon>
    </lineage>
</organism>
<evidence type="ECO:0000255" key="1">
    <source>
        <dbReference type="HAMAP-Rule" id="MF_00255"/>
    </source>
</evidence>
<sequence>MKKYLLEIGCEELPPKAVDTAISYFKERLEGLFENFFEYRTEENISVFGTPRRIGFILSNLREKEPSEEKTILGPPAKVGIDEKGNFTKAALAFASKNNIPVEQLKIIENEKGRYIGATLIKEGKDIRTFIQEVIPDLITKIPFPKLMRWNETGFRFSRPVRWIVSLLDNEVVSFSIAGIDADRYTHLHRFMTTPTGRGERKKIPDVDSYFQIMKLGFIIPKYEERKEAVKTQLTGFANSINAEPVIDEDLLDEVTNLTEFPVGILGDFSPEYLILPKEVIITVCKVHQRYFNFEKDGKLIPKFLAFSNTAVKDREKVKSGYEKVLKARLEDALFFYEEDLKHNLEDFYPQLEGIQFHHKLGSMLDKVKRNGEIAVLLSRELNFENLKDLLRANKLSKCDLLTEMVKEFDELQGIMGMHYALKQGEKEEVAKAIYEHYLPKTSDDQLPETDIGTLLSLSDKLDTVISFISIGEKPKATADPFGIRRNSIGIVRILVEKGIDLDLKKLLQDISREARKVKILRLADIEKEWEIIFDERTIPEILDFIEGRFIAYMKDKGFDTDIINSVVSVDSYNLYRNYLKIKSIQELKKNPEFTDIMTVFKRVGRIIPEEFEEHFNPDTLVQDEEKELYRKYTEVNKIFSKDVEDRRYTEALNELLKMKPFIDKFFDNVMVMTEDKKLRENRLSLMKLINNMFRKIADFTKITT</sequence>
<gene>
    <name evidence="1" type="primary">glyS</name>
    <name type="ordered locus">PERMA_0569</name>
</gene>
<protein>
    <recommendedName>
        <fullName evidence="1">Glycine--tRNA ligase beta subunit</fullName>
        <ecNumber evidence="1">6.1.1.14</ecNumber>
    </recommendedName>
    <alternativeName>
        <fullName evidence="1">Glycyl-tRNA synthetase beta subunit</fullName>
        <shortName evidence="1">GlyRS</shortName>
    </alternativeName>
</protein>
<reference key="1">
    <citation type="journal article" date="2009" name="J. Bacteriol.">
        <title>Complete and draft genome sequences of six members of the Aquificales.</title>
        <authorList>
            <person name="Reysenbach A.-L."/>
            <person name="Hamamura N."/>
            <person name="Podar M."/>
            <person name="Griffiths E."/>
            <person name="Ferreira S."/>
            <person name="Hochstein R."/>
            <person name="Heidelberg J."/>
            <person name="Johnson J."/>
            <person name="Mead D."/>
            <person name="Pohorille A."/>
            <person name="Sarmiento M."/>
            <person name="Schweighofer K."/>
            <person name="Seshadri R."/>
            <person name="Voytek M.A."/>
        </authorList>
    </citation>
    <scope>NUCLEOTIDE SEQUENCE [LARGE SCALE GENOMIC DNA]</scope>
    <source>
        <strain>DSM 14350 / EX-H1</strain>
    </source>
</reference>
<proteinExistence type="inferred from homology"/>
<feature type="chain" id="PRO_1000197209" description="Glycine--tRNA ligase beta subunit">
    <location>
        <begin position="1"/>
        <end position="705"/>
    </location>
</feature>
<keyword id="KW-0030">Aminoacyl-tRNA synthetase</keyword>
<keyword id="KW-0067">ATP-binding</keyword>
<keyword id="KW-0963">Cytoplasm</keyword>
<keyword id="KW-0436">Ligase</keyword>
<keyword id="KW-0547">Nucleotide-binding</keyword>
<keyword id="KW-0648">Protein biosynthesis</keyword>
<keyword id="KW-1185">Reference proteome</keyword>